<proteinExistence type="inferred from homology"/>
<dbReference type="EC" id="3.1.26.3" evidence="1"/>
<dbReference type="EMBL" id="CP000812">
    <property type="protein sequence ID" value="ABV32631.1"/>
    <property type="molecule type" value="Genomic_DNA"/>
</dbReference>
<dbReference type="RefSeq" id="WP_012002112.1">
    <property type="nucleotide sequence ID" value="NZ_BSDV01000001.1"/>
</dbReference>
<dbReference type="SMR" id="A8F397"/>
<dbReference type="STRING" id="416591.Tlet_0059"/>
<dbReference type="KEGG" id="tle:Tlet_0059"/>
<dbReference type="eggNOG" id="COG0571">
    <property type="taxonomic scope" value="Bacteria"/>
</dbReference>
<dbReference type="HOGENOM" id="CLU_000907_1_3_0"/>
<dbReference type="OrthoDB" id="9805026at2"/>
<dbReference type="Proteomes" id="UP000002016">
    <property type="component" value="Chromosome"/>
</dbReference>
<dbReference type="GO" id="GO:0005737">
    <property type="term" value="C:cytoplasm"/>
    <property type="evidence" value="ECO:0007669"/>
    <property type="project" value="UniProtKB-SubCell"/>
</dbReference>
<dbReference type="GO" id="GO:0003725">
    <property type="term" value="F:double-stranded RNA binding"/>
    <property type="evidence" value="ECO:0007669"/>
    <property type="project" value="TreeGrafter"/>
</dbReference>
<dbReference type="GO" id="GO:0046872">
    <property type="term" value="F:metal ion binding"/>
    <property type="evidence" value="ECO:0007669"/>
    <property type="project" value="UniProtKB-KW"/>
</dbReference>
<dbReference type="GO" id="GO:0004525">
    <property type="term" value="F:ribonuclease III activity"/>
    <property type="evidence" value="ECO:0007669"/>
    <property type="project" value="UniProtKB-UniRule"/>
</dbReference>
<dbReference type="GO" id="GO:0019843">
    <property type="term" value="F:rRNA binding"/>
    <property type="evidence" value="ECO:0007669"/>
    <property type="project" value="UniProtKB-KW"/>
</dbReference>
<dbReference type="GO" id="GO:0006397">
    <property type="term" value="P:mRNA processing"/>
    <property type="evidence" value="ECO:0007669"/>
    <property type="project" value="UniProtKB-UniRule"/>
</dbReference>
<dbReference type="GO" id="GO:0010468">
    <property type="term" value="P:regulation of gene expression"/>
    <property type="evidence" value="ECO:0007669"/>
    <property type="project" value="TreeGrafter"/>
</dbReference>
<dbReference type="GO" id="GO:0006364">
    <property type="term" value="P:rRNA processing"/>
    <property type="evidence" value="ECO:0007669"/>
    <property type="project" value="UniProtKB-UniRule"/>
</dbReference>
<dbReference type="GO" id="GO:0008033">
    <property type="term" value="P:tRNA processing"/>
    <property type="evidence" value="ECO:0007669"/>
    <property type="project" value="UniProtKB-KW"/>
</dbReference>
<dbReference type="CDD" id="cd10845">
    <property type="entry name" value="DSRM_RNAse_III_family"/>
    <property type="match status" value="1"/>
</dbReference>
<dbReference type="CDD" id="cd00593">
    <property type="entry name" value="RIBOc"/>
    <property type="match status" value="1"/>
</dbReference>
<dbReference type="FunFam" id="1.10.1520.10:FF:000001">
    <property type="entry name" value="Ribonuclease 3"/>
    <property type="match status" value="1"/>
</dbReference>
<dbReference type="FunFam" id="3.30.160.20:FF:000003">
    <property type="entry name" value="Ribonuclease 3"/>
    <property type="match status" value="1"/>
</dbReference>
<dbReference type="Gene3D" id="3.30.160.20">
    <property type="match status" value="1"/>
</dbReference>
<dbReference type="Gene3D" id="1.10.1520.10">
    <property type="entry name" value="Ribonuclease III domain"/>
    <property type="match status" value="1"/>
</dbReference>
<dbReference type="HAMAP" id="MF_00104">
    <property type="entry name" value="RNase_III"/>
    <property type="match status" value="1"/>
</dbReference>
<dbReference type="InterPro" id="IPR014720">
    <property type="entry name" value="dsRBD_dom"/>
</dbReference>
<dbReference type="InterPro" id="IPR011907">
    <property type="entry name" value="RNase_III"/>
</dbReference>
<dbReference type="InterPro" id="IPR000999">
    <property type="entry name" value="RNase_III_dom"/>
</dbReference>
<dbReference type="InterPro" id="IPR036389">
    <property type="entry name" value="RNase_III_sf"/>
</dbReference>
<dbReference type="NCBIfam" id="TIGR02191">
    <property type="entry name" value="RNaseIII"/>
    <property type="match status" value="1"/>
</dbReference>
<dbReference type="PANTHER" id="PTHR11207:SF0">
    <property type="entry name" value="RIBONUCLEASE 3"/>
    <property type="match status" value="1"/>
</dbReference>
<dbReference type="PANTHER" id="PTHR11207">
    <property type="entry name" value="RIBONUCLEASE III"/>
    <property type="match status" value="1"/>
</dbReference>
<dbReference type="Pfam" id="PF00035">
    <property type="entry name" value="dsrm"/>
    <property type="match status" value="1"/>
</dbReference>
<dbReference type="Pfam" id="PF14622">
    <property type="entry name" value="Ribonucleas_3_3"/>
    <property type="match status" value="1"/>
</dbReference>
<dbReference type="SMART" id="SM00358">
    <property type="entry name" value="DSRM"/>
    <property type="match status" value="1"/>
</dbReference>
<dbReference type="SMART" id="SM00535">
    <property type="entry name" value="RIBOc"/>
    <property type="match status" value="1"/>
</dbReference>
<dbReference type="SUPFAM" id="SSF54768">
    <property type="entry name" value="dsRNA-binding domain-like"/>
    <property type="match status" value="1"/>
</dbReference>
<dbReference type="SUPFAM" id="SSF69065">
    <property type="entry name" value="RNase III domain-like"/>
    <property type="match status" value="1"/>
</dbReference>
<dbReference type="PROSITE" id="PS50137">
    <property type="entry name" value="DS_RBD"/>
    <property type="match status" value="1"/>
</dbReference>
<dbReference type="PROSITE" id="PS00517">
    <property type="entry name" value="RNASE_3_1"/>
    <property type="match status" value="1"/>
</dbReference>
<dbReference type="PROSITE" id="PS50142">
    <property type="entry name" value="RNASE_3_2"/>
    <property type="match status" value="1"/>
</dbReference>
<accession>A8F397</accession>
<protein>
    <recommendedName>
        <fullName evidence="1">Ribonuclease 3</fullName>
        <ecNumber evidence="1">3.1.26.3</ecNumber>
    </recommendedName>
    <alternativeName>
        <fullName evidence="1">Ribonuclease III</fullName>
        <shortName evidence="1">RNase III</shortName>
    </alternativeName>
</protein>
<name>RNC_PSELT</name>
<organism>
    <name type="scientific">Pseudothermotoga lettingae (strain ATCC BAA-301 / DSM 14385 / NBRC 107922 / TMO)</name>
    <name type="common">Thermotoga lettingae</name>
    <dbReference type="NCBI Taxonomy" id="416591"/>
    <lineage>
        <taxon>Bacteria</taxon>
        <taxon>Thermotogati</taxon>
        <taxon>Thermotogota</taxon>
        <taxon>Thermotogae</taxon>
        <taxon>Thermotogales</taxon>
        <taxon>Thermotogaceae</taxon>
        <taxon>Pseudothermotoga</taxon>
    </lineage>
</organism>
<comment type="function">
    <text evidence="1">Digests double-stranded RNA. Involved in the processing of primary rRNA transcript to yield the immediate precursors to the large and small rRNAs (23S and 16S). Processes some mRNAs, and tRNAs when they are encoded in the rRNA operon. Processes pre-crRNA and tracrRNA of type II CRISPR loci if present in the organism.</text>
</comment>
<comment type="catalytic activity">
    <reaction evidence="1">
        <text>Endonucleolytic cleavage to 5'-phosphomonoester.</text>
        <dbReference type="EC" id="3.1.26.3"/>
    </reaction>
</comment>
<comment type="cofactor">
    <cofactor evidence="1">
        <name>Mg(2+)</name>
        <dbReference type="ChEBI" id="CHEBI:18420"/>
    </cofactor>
</comment>
<comment type="subunit">
    <text evidence="1">Homodimer.</text>
</comment>
<comment type="subcellular location">
    <subcellularLocation>
        <location evidence="1">Cytoplasm</location>
    </subcellularLocation>
</comment>
<comment type="similarity">
    <text evidence="1">Belongs to the ribonuclease III family.</text>
</comment>
<gene>
    <name evidence="1" type="primary">rnc</name>
    <name type="ordered locus">Tlet_0059</name>
</gene>
<sequence length="238" mass="26889">MNKEEAKILIDFMEKIGYRFYEPELLYNALCHSSYAHEQKQRGRKDVESNERLEFLGDAVIDLLLAEYLYLEFPEASEGVMAKVKAAIASEEALAQIARDINLGRYMFLGRGEEVSSGRERDSLLADMLEAVVAAVYIDGGLTAVKKVFLSYFAKYAKEVVEGKIVFDYKTSLQEITQARYRKLPEYVLVNEKGPSHMKKFTVELRLSGKLIAVGEGPSIKEAEKEAARRAIEKLKGD</sequence>
<feature type="chain" id="PRO_1000075845" description="Ribonuclease 3">
    <location>
        <begin position="1"/>
        <end position="238"/>
    </location>
</feature>
<feature type="domain" description="RNase III" evidence="1">
    <location>
        <begin position="9"/>
        <end position="141"/>
    </location>
</feature>
<feature type="domain" description="DRBM" evidence="1">
    <location>
        <begin position="168"/>
        <end position="237"/>
    </location>
</feature>
<feature type="active site" evidence="1">
    <location>
        <position position="58"/>
    </location>
</feature>
<feature type="active site" evidence="1">
    <location>
        <position position="130"/>
    </location>
</feature>
<feature type="binding site" evidence="1">
    <location>
        <position position="54"/>
    </location>
    <ligand>
        <name>Mg(2+)</name>
        <dbReference type="ChEBI" id="CHEBI:18420"/>
    </ligand>
</feature>
<feature type="binding site" evidence="1">
    <location>
        <position position="127"/>
    </location>
    <ligand>
        <name>Mg(2+)</name>
        <dbReference type="ChEBI" id="CHEBI:18420"/>
    </ligand>
</feature>
<feature type="binding site" evidence="1">
    <location>
        <position position="130"/>
    </location>
    <ligand>
        <name>Mg(2+)</name>
        <dbReference type="ChEBI" id="CHEBI:18420"/>
    </ligand>
</feature>
<keyword id="KW-0963">Cytoplasm</keyword>
<keyword id="KW-0255">Endonuclease</keyword>
<keyword id="KW-0378">Hydrolase</keyword>
<keyword id="KW-0460">Magnesium</keyword>
<keyword id="KW-0479">Metal-binding</keyword>
<keyword id="KW-0507">mRNA processing</keyword>
<keyword id="KW-0540">Nuclease</keyword>
<keyword id="KW-1185">Reference proteome</keyword>
<keyword id="KW-0694">RNA-binding</keyword>
<keyword id="KW-0698">rRNA processing</keyword>
<keyword id="KW-0699">rRNA-binding</keyword>
<keyword id="KW-0819">tRNA processing</keyword>
<evidence type="ECO:0000255" key="1">
    <source>
        <dbReference type="HAMAP-Rule" id="MF_00104"/>
    </source>
</evidence>
<reference key="1">
    <citation type="submission" date="2007-08" db="EMBL/GenBank/DDBJ databases">
        <title>Complete sequence of Thermotoga lettingae TMO.</title>
        <authorList>
            <consortium name="US DOE Joint Genome Institute"/>
            <person name="Copeland A."/>
            <person name="Lucas S."/>
            <person name="Lapidus A."/>
            <person name="Barry K."/>
            <person name="Glavina del Rio T."/>
            <person name="Dalin E."/>
            <person name="Tice H."/>
            <person name="Pitluck S."/>
            <person name="Foster B."/>
            <person name="Bruce D."/>
            <person name="Schmutz J."/>
            <person name="Larimer F."/>
            <person name="Land M."/>
            <person name="Hauser L."/>
            <person name="Kyrpides N."/>
            <person name="Mikhailova N."/>
            <person name="Nelson K."/>
            <person name="Gogarten J.P."/>
            <person name="Noll K."/>
            <person name="Richardson P."/>
        </authorList>
    </citation>
    <scope>NUCLEOTIDE SEQUENCE [LARGE SCALE GENOMIC DNA]</scope>
    <source>
        <strain>ATCC BAA-301 / DSM 14385 / NBRC 107922 / TMO</strain>
    </source>
</reference>